<comment type="function">
    <text evidence="1">Phosphoribosylformylglycinamidine synthase involved in the purines biosynthetic pathway. Catalyzes the ATP-dependent conversion of formylglycinamide ribonucleotide (FGAR) and glutamine to yield formylglycinamidine ribonucleotide (FGAM) and glutamate.</text>
</comment>
<comment type="catalytic activity">
    <reaction evidence="1">
        <text>N(2)-formyl-N(1)-(5-phospho-beta-D-ribosyl)glycinamide + L-glutamine + ATP + H2O = 2-formamido-N(1)-(5-O-phospho-beta-D-ribosyl)acetamidine + L-glutamate + ADP + phosphate + H(+)</text>
        <dbReference type="Rhea" id="RHEA:17129"/>
        <dbReference type="ChEBI" id="CHEBI:15377"/>
        <dbReference type="ChEBI" id="CHEBI:15378"/>
        <dbReference type="ChEBI" id="CHEBI:29985"/>
        <dbReference type="ChEBI" id="CHEBI:30616"/>
        <dbReference type="ChEBI" id="CHEBI:43474"/>
        <dbReference type="ChEBI" id="CHEBI:58359"/>
        <dbReference type="ChEBI" id="CHEBI:147286"/>
        <dbReference type="ChEBI" id="CHEBI:147287"/>
        <dbReference type="ChEBI" id="CHEBI:456216"/>
        <dbReference type="EC" id="6.3.5.3"/>
    </reaction>
</comment>
<comment type="pathway">
    <text evidence="1">Purine metabolism; IMP biosynthesis via de novo pathway; 5-amino-1-(5-phospho-D-ribosyl)imidazole from N(2)-formyl-N(1)-(5-phospho-D-ribosyl)glycinamide: step 1/2.</text>
</comment>
<comment type="subunit">
    <text evidence="1">Monomer.</text>
</comment>
<comment type="subcellular location">
    <subcellularLocation>
        <location evidence="1">Cytoplasm</location>
    </subcellularLocation>
</comment>
<comment type="similarity">
    <text evidence="1">In the N-terminal section; belongs to the FGAMS family.</text>
</comment>
<protein>
    <recommendedName>
        <fullName evidence="1">Phosphoribosylformylglycinamidine synthase</fullName>
        <shortName evidence="1">FGAM synthase</shortName>
        <shortName evidence="1">FGAMS</shortName>
        <ecNumber evidence="1">6.3.5.3</ecNumber>
    </recommendedName>
    <alternativeName>
        <fullName evidence="1">Formylglycinamide ribonucleotide amidotransferase</fullName>
        <shortName evidence="1">FGAR amidotransferase</shortName>
        <shortName evidence="1">FGAR-AT</shortName>
    </alternativeName>
</protein>
<reference key="1">
    <citation type="journal article" date="2005" name="Proc. Natl. Acad. Sci. U.S.A.">
        <title>Comparison of the complete genome sequences of Pseudomonas syringae pv. syringae B728a and pv. tomato DC3000.</title>
        <authorList>
            <person name="Feil H."/>
            <person name="Feil W.S."/>
            <person name="Chain P."/>
            <person name="Larimer F."/>
            <person name="Dibartolo G."/>
            <person name="Copeland A."/>
            <person name="Lykidis A."/>
            <person name="Trong S."/>
            <person name="Nolan M."/>
            <person name="Goltsman E."/>
            <person name="Thiel J."/>
            <person name="Malfatti S."/>
            <person name="Loper J.E."/>
            <person name="Lapidus A."/>
            <person name="Detter J.C."/>
            <person name="Land M."/>
            <person name="Richardson P.M."/>
            <person name="Kyrpides N.C."/>
            <person name="Ivanova N."/>
            <person name="Lindow S.E."/>
        </authorList>
    </citation>
    <scope>NUCLEOTIDE SEQUENCE [LARGE SCALE GENOMIC DNA]</scope>
    <source>
        <strain>B728a</strain>
    </source>
</reference>
<evidence type="ECO:0000255" key="1">
    <source>
        <dbReference type="HAMAP-Rule" id="MF_00419"/>
    </source>
</evidence>
<evidence type="ECO:0000256" key="2">
    <source>
        <dbReference type="SAM" id="MobiDB-lite"/>
    </source>
</evidence>
<keyword id="KW-0067">ATP-binding</keyword>
<keyword id="KW-0963">Cytoplasm</keyword>
<keyword id="KW-0315">Glutamine amidotransferase</keyword>
<keyword id="KW-0436">Ligase</keyword>
<keyword id="KW-0460">Magnesium</keyword>
<keyword id="KW-0479">Metal-binding</keyword>
<keyword id="KW-0547">Nucleotide-binding</keyword>
<keyword id="KW-0658">Purine biosynthesis</keyword>
<feature type="chain" id="PRO_0000264590" description="Phosphoribosylformylglycinamidine synthase">
    <location>
        <begin position="1"/>
        <end position="1298"/>
    </location>
</feature>
<feature type="domain" description="Glutamine amidotransferase type-1" evidence="1">
    <location>
        <begin position="1045"/>
        <end position="1298"/>
    </location>
</feature>
<feature type="region of interest" description="Disordered" evidence="2">
    <location>
        <begin position="303"/>
        <end position="327"/>
    </location>
</feature>
<feature type="active site" description="Nucleophile" evidence="1">
    <location>
        <position position="1138"/>
    </location>
</feature>
<feature type="active site" evidence="1">
    <location>
        <position position="1263"/>
    </location>
</feature>
<feature type="active site" evidence="1">
    <location>
        <position position="1265"/>
    </location>
</feature>
<feature type="binding site" evidence="1">
    <location>
        <begin position="305"/>
        <end position="316"/>
    </location>
    <ligand>
        <name>ATP</name>
        <dbReference type="ChEBI" id="CHEBI:30616"/>
    </ligand>
</feature>
<feature type="binding site" evidence="1">
    <location>
        <begin position="384"/>
        <end position="386"/>
    </location>
    <ligand>
        <name>ATP</name>
        <dbReference type="ChEBI" id="CHEBI:30616"/>
    </ligand>
</feature>
<feature type="binding site" evidence="1">
    <location>
        <position position="676"/>
    </location>
    <ligand>
        <name>ATP</name>
        <dbReference type="ChEBI" id="CHEBI:30616"/>
    </ligand>
</feature>
<feature type="binding site" evidence="1">
    <location>
        <position position="677"/>
    </location>
    <ligand>
        <name>Mg(2+)</name>
        <dbReference type="ChEBI" id="CHEBI:18420"/>
    </ligand>
</feature>
<feature type="binding site" evidence="1">
    <location>
        <position position="716"/>
    </location>
    <ligand>
        <name>Mg(2+)</name>
        <dbReference type="ChEBI" id="CHEBI:18420"/>
    </ligand>
</feature>
<feature type="binding site" evidence="1">
    <location>
        <position position="720"/>
    </location>
    <ligand>
        <name>Mg(2+)</name>
        <dbReference type="ChEBI" id="CHEBI:18420"/>
    </ligand>
</feature>
<feature type="binding site" evidence="1">
    <location>
        <position position="884"/>
    </location>
    <ligand>
        <name>Mg(2+)</name>
        <dbReference type="ChEBI" id="CHEBI:18420"/>
    </ligand>
</feature>
<feature type="binding site" evidence="1">
    <location>
        <position position="886"/>
    </location>
    <ligand>
        <name>ATP</name>
        <dbReference type="ChEBI" id="CHEBI:30616"/>
    </ligand>
</feature>
<dbReference type="EC" id="6.3.5.3" evidence="1"/>
<dbReference type="EMBL" id="CP000075">
    <property type="protein sequence ID" value="AAY36320.1"/>
    <property type="molecule type" value="Genomic_DNA"/>
</dbReference>
<dbReference type="RefSeq" id="WP_011266924.1">
    <property type="nucleotide sequence ID" value="NC_007005.1"/>
</dbReference>
<dbReference type="RefSeq" id="YP_234358.1">
    <property type="nucleotide sequence ID" value="NC_007005.1"/>
</dbReference>
<dbReference type="SMR" id="Q4ZX02"/>
<dbReference type="STRING" id="205918.Psyr_1269"/>
<dbReference type="KEGG" id="psb:Psyr_1269"/>
<dbReference type="PATRIC" id="fig|205918.7.peg.1301"/>
<dbReference type="eggNOG" id="COG0046">
    <property type="taxonomic scope" value="Bacteria"/>
</dbReference>
<dbReference type="eggNOG" id="COG0047">
    <property type="taxonomic scope" value="Bacteria"/>
</dbReference>
<dbReference type="HOGENOM" id="CLU_001031_0_2_6"/>
<dbReference type="OrthoDB" id="9804441at2"/>
<dbReference type="UniPathway" id="UPA00074">
    <property type="reaction ID" value="UER00128"/>
</dbReference>
<dbReference type="Proteomes" id="UP000000426">
    <property type="component" value="Chromosome"/>
</dbReference>
<dbReference type="GO" id="GO:0005737">
    <property type="term" value="C:cytoplasm"/>
    <property type="evidence" value="ECO:0007669"/>
    <property type="project" value="UniProtKB-SubCell"/>
</dbReference>
<dbReference type="GO" id="GO:0005524">
    <property type="term" value="F:ATP binding"/>
    <property type="evidence" value="ECO:0007669"/>
    <property type="project" value="UniProtKB-UniRule"/>
</dbReference>
<dbReference type="GO" id="GO:0046872">
    <property type="term" value="F:metal ion binding"/>
    <property type="evidence" value="ECO:0007669"/>
    <property type="project" value="UniProtKB-KW"/>
</dbReference>
<dbReference type="GO" id="GO:0004642">
    <property type="term" value="F:phosphoribosylformylglycinamidine synthase activity"/>
    <property type="evidence" value="ECO:0007669"/>
    <property type="project" value="UniProtKB-UniRule"/>
</dbReference>
<dbReference type="GO" id="GO:0006189">
    <property type="term" value="P:'de novo' IMP biosynthetic process"/>
    <property type="evidence" value="ECO:0007669"/>
    <property type="project" value="UniProtKB-UniRule"/>
</dbReference>
<dbReference type="CDD" id="cd01740">
    <property type="entry name" value="GATase1_FGAR_AT"/>
    <property type="match status" value="1"/>
</dbReference>
<dbReference type="CDD" id="cd02203">
    <property type="entry name" value="PurL_repeat1"/>
    <property type="match status" value="1"/>
</dbReference>
<dbReference type="CDD" id="cd02204">
    <property type="entry name" value="PurL_repeat2"/>
    <property type="match status" value="1"/>
</dbReference>
<dbReference type="FunFam" id="1.10.8.750:FF:000002">
    <property type="entry name" value="Phosphoribosylformylglycinamidine synthase"/>
    <property type="match status" value="1"/>
</dbReference>
<dbReference type="FunFam" id="3.30.1330.10:FF:000002">
    <property type="entry name" value="Phosphoribosylformylglycinamidine synthase"/>
    <property type="match status" value="1"/>
</dbReference>
<dbReference type="FunFam" id="3.30.1330.10:FF:000005">
    <property type="entry name" value="Phosphoribosylformylglycinamidine synthase"/>
    <property type="match status" value="1"/>
</dbReference>
<dbReference type="FunFam" id="3.40.50.880:FF:000008">
    <property type="entry name" value="Phosphoribosylformylglycinamidine synthase"/>
    <property type="match status" value="1"/>
</dbReference>
<dbReference type="FunFam" id="3.90.650.10:FF:000002">
    <property type="entry name" value="Phosphoribosylformylglycinamidine synthase"/>
    <property type="match status" value="1"/>
</dbReference>
<dbReference type="FunFam" id="3.90.650.10:FF:000005">
    <property type="entry name" value="Phosphoribosylformylglycinamidine synthase"/>
    <property type="match status" value="1"/>
</dbReference>
<dbReference type="Gene3D" id="3.40.50.880">
    <property type="match status" value="1"/>
</dbReference>
<dbReference type="Gene3D" id="1.10.8.750">
    <property type="entry name" value="Phosphoribosylformylglycinamidine synthase, linker domain"/>
    <property type="match status" value="1"/>
</dbReference>
<dbReference type="Gene3D" id="3.90.650.10">
    <property type="entry name" value="PurM-like C-terminal domain"/>
    <property type="match status" value="2"/>
</dbReference>
<dbReference type="Gene3D" id="3.30.1330.10">
    <property type="entry name" value="PurM-like, N-terminal domain"/>
    <property type="match status" value="2"/>
</dbReference>
<dbReference type="HAMAP" id="MF_00419">
    <property type="entry name" value="PurL_1"/>
    <property type="match status" value="1"/>
</dbReference>
<dbReference type="InterPro" id="IPR029062">
    <property type="entry name" value="Class_I_gatase-like"/>
</dbReference>
<dbReference type="InterPro" id="IPR040707">
    <property type="entry name" value="FGAR-AT_N"/>
</dbReference>
<dbReference type="InterPro" id="IPR055181">
    <property type="entry name" value="FGAR-AT_PurM_N-like"/>
</dbReference>
<dbReference type="InterPro" id="IPR010073">
    <property type="entry name" value="PurL_large"/>
</dbReference>
<dbReference type="InterPro" id="IPR041609">
    <property type="entry name" value="PurL_linker"/>
</dbReference>
<dbReference type="InterPro" id="IPR010918">
    <property type="entry name" value="PurM-like_C_dom"/>
</dbReference>
<dbReference type="InterPro" id="IPR036676">
    <property type="entry name" value="PurM-like_C_sf"/>
</dbReference>
<dbReference type="InterPro" id="IPR036921">
    <property type="entry name" value="PurM-like_N_sf"/>
</dbReference>
<dbReference type="InterPro" id="IPR036604">
    <property type="entry name" value="PurS-like_sf"/>
</dbReference>
<dbReference type="NCBIfam" id="TIGR01735">
    <property type="entry name" value="FGAM_synt"/>
    <property type="match status" value="1"/>
</dbReference>
<dbReference type="NCBIfam" id="NF003672">
    <property type="entry name" value="PRK05297.1"/>
    <property type="match status" value="1"/>
</dbReference>
<dbReference type="PANTHER" id="PTHR10099">
    <property type="entry name" value="PHOSPHORIBOSYLFORMYLGLYCINAMIDINE SYNTHASE"/>
    <property type="match status" value="1"/>
</dbReference>
<dbReference type="PANTHER" id="PTHR10099:SF1">
    <property type="entry name" value="PHOSPHORIBOSYLFORMYLGLYCINAMIDINE SYNTHASE"/>
    <property type="match status" value="1"/>
</dbReference>
<dbReference type="Pfam" id="PF02769">
    <property type="entry name" value="AIRS_C"/>
    <property type="match status" value="2"/>
</dbReference>
<dbReference type="Pfam" id="PF18072">
    <property type="entry name" value="FGAR-AT_linker"/>
    <property type="match status" value="1"/>
</dbReference>
<dbReference type="Pfam" id="PF18076">
    <property type="entry name" value="FGAR-AT_N"/>
    <property type="match status" value="1"/>
</dbReference>
<dbReference type="Pfam" id="PF22689">
    <property type="entry name" value="FGAR-AT_PurM_N-like"/>
    <property type="match status" value="1"/>
</dbReference>
<dbReference type="Pfam" id="PF13507">
    <property type="entry name" value="GATase_5"/>
    <property type="match status" value="1"/>
</dbReference>
<dbReference type="SMART" id="SM01211">
    <property type="entry name" value="GATase_5"/>
    <property type="match status" value="1"/>
</dbReference>
<dbReference type="SUPFAM" id="SSF52317">
    <property type="entry name" value="Class I glutamine amidotransferase-like"/>
    <property type="match status" value="1"/>
</dbReference>
<dbReference type="SUPFAM" id="SSF109736">
    <property type="entry name" value="FGAM synthase PurL, linker domain"/>
    <property type="match status" value="1"/>
</dbReference>
<dbReference type="SUPFAM" id="SSF56042">
    <property type="entry name" value="PurM C-terminal domain-like"/>
    <property type="match status" value="2"/>
</dbReference>
<dbReference type="SUPFAM" id="SSF55326">
    <property type="entry name" value="PurM N-terminal domain-like"/>
    <property type="match status" value="2"/>
</dbReference>
<dbReference type="SUPFAM" id="SSF82697">
    <property type="entry name" value="PurS-like"/>
    <property type="match status" value="1"/>
</dbReference>
<dbReference type="PROSITE" id="PS51273">
    <property type="entry name" value="GATASE_TYPE_1"/>
    <property type="match status" value="1"/>
</dbReference>
<accession>Q4ZX02</accession>
<gene>
    <name evidence="1" type="primary">purL</name>
    <name type="ordered locus">Psyr_1269</name>
</gene>
<sequence length="1298" mass="140906">MLILRGAPALSAFRHSKLLEQLKQKVSAVSGLYAEFAHFADVNDVLTSEEQQVLDRLLKYGPSVPVQEPSGRLFLVLPRFGTISPWSSKASDIARNCGLSKIQRLERGIAFYVEGQFSETEAQAIADSLHDRMTQLVLGDLEQAANLFSHAQPKPLTAVDILGGGRAALEKANVELGLALAEDEIDYLITSFNGLGRNPHDIELMMFAQANSEHCRHKIFNASWDIDGQSQEKSLFGMIKNTYQMHSEGVLSAYKDNASVIVGNVAGRFFPDPETRQYGAVQEPVHILMKVETHNHPTAIAPFPGAATGSGGEIRDEGATGRGAKPKAGLTGFTVSNLQIPGFVQPWEVPYGKPERIVTALDIMIEGPLGGAAFNNEFGRPALTGYFRTFEQSITTPHGDEVRGYHKPIMLAGGMGNIREDHVQKGEITVGSKLIVLGGPAMLIGLGGGAASSMATGTSSADLDFASVQRENPEMERRCQEVIDRCWQLGDRNPISFIHDVGAGGLSNAFPELVNDGDRGGRFELRNVPNDEPGMAPLEIWSNESQERYVLAVGVEDFERFKAICERERCPFAVVGEATAEPQLTVTDSHFGNSPVDMPLEVLLGKAPRMHRSVAREEEIGDDFDPSTLDIEESVQRVLRHPAVASKSFLITIGDRSITGLVARDQMVGPWQVPVADCAVTATSFDVNTGEAMAMGERTPLALLDAPASGRMAIGETLTNIAASLIEKLSDIKLSANWMSAAGHPGEDARLYDTVKAVGMELCPELGITIPVGKDSMSMKTRWSDEGTEKSVTSPLSLIVTGFAPVVDIRQTLTPELRMDKGITDLILIDLGRGQNRMGASILAQTHGKLGRVAPDVDDAEDLKAFFAVIQGLNSDGHILSYHDRSDGGLLVSTLEMAFAGHCGLNLHLDGVADNVSELSAILFNEELGAVIQVRQDATPLVLAQFSAAGLEDCVAVIGQPINNDEVSISFHGEPVFSGQRRLLQRQWAETSYQIQRLRDNAECADQEFDALLEEDNPGLTVKLGFDVNDDIAAPYIKTGVRPQVAVLREQGVNGQVEMAAAFDRAGFNAIDVHMSDILAGRVDLNDFKGMVACGGFSYGDVLGAGEGWAKSALFNSRARDAFQGFFERSDSFTLGVCNGCQMLSNLHELIPGSEFWPHFVRNRSEQFEARVAMVQVQESASIFLQGMAGSRMPIAIAHGEGHAEFRNDDALLEADVSGTVALRFVDNHGKVTETYPANPNGSPRGIGGMTTLDGRVTIMMPHPERVFRAVQNSWRPEDWNEDGAWMRMFRNARAWVN</sequence>
<name>PUR4_PSEU2</name>
<proteinExistence type="inferred from homology"/>
<organism>
    <name type="scientific">Pseudomonas syringae pv. syringae (strain B728a)</name>
    <dbReference type="NCBI Taxonomy" id="205918"/>
    <lineage>
        <taxon>Bacteria</taxon>
        <taxon>Pseudomonadati</taxon>
        <taxon>Pseudomonadota</taxon>
        <taxon>Gammaproteobacteria</taxon>
        <taxon>Pseudomonadales</taxon>
        <taxon>Pseudomonadaceae</taxon>
        <taxon>Pseudomonas</taxon>
        <taxon>Pseudomonas syringae</taxon>
    </lineage>
</organism>